<accession>Q9P6P0</accession>
<evidence type="ECO:0000250" key="1"/>
<evidence type="ECO:0000269" key="2">
    <source>
    </source>
</evidence>
<evidence type="ECO:0000305" key="3"/>
<name>TAF3_SCHPO</name>
<sequence length="155" mass="17681">MEETQIDELYFSLMRIFCSQTLRAAGIDRTKVSLLNSFTDITIRYIRLLSETAMAKAEVGRRSCCDLGDLRLAMEEIGLLNGSEEDVKTLVEWFNGPQVAELRRVSGFVQDSETQVKPKDWLTSLIQKQIRVSGPERFYETVFSASNEEEDVKDS</sequence>
<organism>
    <name type="scientific">Schizosaccharomyces pombe (strain 972 / ATCC 24843)</name>
    <name type="common">Fission yeast</name>
    <dbReference type="NCBI Taxonomy" id="284812"/>
    <lineage>
        <taxon>Eukaryota</taxon>
        <taxon>Fungi</taxon>
        <taxon>Dikarya</taxon>
        <taxon>Ascomycota</taxon>
        <taxon>Taphrinomycotina</taxon>
        <taxon>Schizosaccharomycetes</taxon>
        <taxon>Schizosaccharomycetales</taxon>
        <taxon>Schizosaccharomycetaceae</taxon>
        <taxon>Schizosaccharomyces</taxon>
    </lineage>
</organism>
<comment type="function">
    <text evidence="1">Functions as a component of the DNA-binding general transcription factor complex TFIID. Binding of TFIID to a promoter (with or without TATA element) is the initial step in pre-initiation complex (PIC) formation. TFIID plays a key role in the regulation of gene expression by RNA polymerase II through different activities such as transcription activator interaction, core promoter recognition and selectivity, TFIIA and TFIIB interaction, chromatin modification (histone acetylation by TAF1), facilitation of DNA opening and initiation of transcription (By similarity).</text>
</comment>
<comment type="subcellular location">
    <subcellularLocation>
        <location evidence="2">Cytoplasm</location>
    </subcellularLocation>
    <subcellularLocation>
        <location evidence="2">Nucleus</location>
    </subcellularLocation>
</comment>
<comment type="similarity">
    <text evidence="3">Belongs to the TAF3 family.</text>
</comment>
<keyword id="KW-0963">Cytoplasm</keyword>
<keyword id="KW-0539">Nucleus</keyword>
<keyword id="KW-1185">Reference proteome</keyword>
<keyword id="KW-0804">Transcription</keyword>
<keyword id="KW-0805">Transcription regulation</keyword>
<feature type="chain" id="PRO_0000343435" description="Transcription initiation factor TFIID subunit 3">
    <location>
        <begin position="1"/>
        <end position="155"/>
    </location>
</feature>
<dbReference type="EMBL" id="CU329670">
    <property type="protein sequence ID" value="CAB90151.1"/>
    <property type="molecule type" value="Genomic_DNA"/>
</dbReference>
<dbReference type="RefSeq" id="NP_593833.1">
    <property type="nucleotide sequence ID" value="NM_001019262.2"/>
</dbReference>
<dbReference type="SMR" id="Q9P6P0"/>
<dbReference type="BioGRID" id="280019">
    <property type="interactions" value="2"/>
</dbReference>
<dbReference type="FunCoup" id="Q9P6P0">
    <property type="interactions" value="30"/>
</dbReference>
<dbReference type="STRING" id="284812.Q9P6P0"/>
<dbReference type="iPTMnet" id="Q9P6P0"/>
<dbReference type="PaxDb" id="4896-SPAC823.06.1"/>
<dbReference type="EnsemblFungi" id="SPAC823.06.1">
    <property type="protein sequence ID" value="SPAC823.06.1:pep"/>
    <property type="gene ID" value="SPAC823.06"/>
</dbReference>
<dbReference type="GeneID" id="2543604"/>
<dbReference type="KEGG" id="spo:2543604"/>
<dbReference type="PomBase" id="SPAC823.06">
    <property type="gene designation" value="taf3"/>
</dbReference>
<dbReference type="VEuPathDB" id="FungiDB:SPAC823.06"/>
<dbReference type="eggNOG" id="ENOG502S96D">
    <property type="taxonomic scope" value="Eukaryota"/>
</dbReference>
<dbReference type="HOGENOM" id="CLU_064111_0_0_1"/>
<dbReference type="InParanoid" id="Q9P6P0"/>
<dbReference type="OMA" id="TDIMIRY"/>
<dbReference type="PhylomeDB" id="Q9P6P0"/>
<dbReference type="PRO" id="PR:Q9P6P0"/>
<dbReference type="Proteomes" id="UP000002485">
    <property type="component" value="Chromosome I"/>
</dbReference>
<dbReference type="GO" id="GO:0000785">
    <property type="term" value="C:chromatin"/>
    <property type="evidence" value="ECO:0000305"/>
    <property type="project" value="PomBase"/>
</dbReference>
<dbReference type="GO" id="GO:0005829">
    <property type="term" value="C:cytosol"/>
    <property type="evidence" value="ECO:0007005"/>
    <property type="project" value="PomBase"/>
</dbReference>
<dbReference type="GO" id="GO:0005634">
    <property type="term" value="C:nucleus"/>
    <property type="evidence" value="ECO:0007005"/>
    <property type="project" value="PomBase"/>
</dbReference>
<dbReference type="GO" id="GO:0005669">
    <property type="term" value="C:transcription factor TFIID complex"/>
    <property type="evidence" value="ECO:0000314"/>
    <property type="project" value="PomBase"/>
</dbReference>
<dbReference type="GO" id="GO:0046982">
    <property type="term" value="F:protein heterodimerization activity"/>
    <property type="evidence" value="ECO:0007669"/>
    <property type="project" value="InterPro"/>
</dbReference>
<dbReference type="GO" id="GO:0016251">
    <property type="term" value="F:RNA polymerase II general transcription initiation factor activity"/>
    <property type="evidence" value="ECO:0000269"/>
    <property type="project" value="PomBase"/>
</dbReference>
<dbReference type="GO" id="GO:0006367">
    <property type="term" value="P:transcription initiation at RNA polymerase II promoter"/>
    <property type="evidence" value="ECO:0000269"/>
    <property type="project" value="PomBase"/>
</dbReference>
<dbReference type="CDD" id="cd00076">
    <property type="entry name" value="HFD_SF"/>
    <property type="match status" value="1"/>
</dbReference>
<dbReference type="Gene3D" id="1.10.20.10">
    <property type="entry name" value="Histone, subunit A"/>
    <property type="match status" value="1"/>
</dbReference>
<dbReference type="InterPro" id="IPR006565">
    <property type="entry name" value="BTP"/>
</dbReference>
<dbReference type="InterPro" id="IPR009072">
    <property type="entry name" value="Histone-fold"/>
</dbReference>
<dbReference type="Pfam" id="PF07524">
    <property type="entry name" value="Bromo_TP"/>
    <property type="match status" value="1"/>
</dbReference>
<dbReference type="SMART" id="SM00576">
    <property type="entry name" value="BTP"/>
    <property type="match status" value="1"/>
</dbReference>
<gene>
    <name type="primary">taf3</name>
    <name type="ORF">SPAC823.06</name>
</gene>
<protein>
    <recommendedName>
        <fullName>Transcription initiation factor TFIID subunit 3</fullName>
    </recommendedName>
    <alternativeName>
        <fullName>TBP-associated factor 3</fullName>
    </alternativeName>
</protein>
<reference key="1">
    <citation type="journal article" date="2002" name="Nature">
        <title>The genome sequence of Schizosaccharomyces pombe.</title>
        <authorList>
            <person name="Wood V."/>
            <person name="Gwilliam R."/>
            <person name="Rajandream M.A."/>
            <person name="Lyne M.H."/>
            <person name="Lyne R."/>
            <person name="Stewart A."/>
            <person name="Sgouros J.G."/>
            <person name="Peat N."/>
            <person name="Hayles J."/>
            <person name="Baker S.G."/>
            <person name="Basham D."/>
            <person name="Bowman S."/>
            <person name="Brooks K."/>
            <person name="Brown D."/>
            <person name="Brown S."/>
            <person name="Chillingworth T."/>
            <person name="Churcher C.M."/>
            <person name="Collins M."/>
            <person name="Connor R."/>
            <person name="Cronin A."/>
            <person name="Davis P."/>
            <person name="Feltwell T."/>
            <person name="Fraser A."/>
            <person name="Gentles S."/>
            <person name="Goble A."/>
            <person name="Hamlin N."/>
            <person name="Harris D.E."/>
            <person name="Hidalgo J."/>
            <person name="Hodgson G."/>
            <person name="Holroyd S."/>
            <person name="Hornsby T."/>
            <person name="Howarth S."/>
            <person name="Huckle E.J."/>
            <person name="Hunt S."/>
            <person name="Jagels K."/>
            <person name="James K.D."/>
            <person name="Jones L."/>
            <person name="Jones M."/>
            <person name="Leather S."/>
            <person name="McDonald S."/>
            <person name="McLean J."/>
            <person name="Mooney P."/>
            <person name="Moule S."/>
            <person name="Mungall K.L."/>
            <person name="Murphy L.D."/>
            <person name="Niblett D."/>
            <person name="Odell C."/>
            <person name="Oliver K."/>
            <person name="O'Neil S."/>
            <person name="Pearson D."/>
            <person name="Quail M.A."/>
            <person name="Rabbinowitsch E."/>
            <person name="Rutherford K.M."/>
            <person name="Rutter S."/>
            <person name="Saunders D."/>
            <person name="Seeger K."/>
            <person name="Sharp S."/>
            <person name="Skelton J."/>
            <person name="Simmonds M.N."/>
            <person name="Squares R."/>
            <person name="Squares S."/>
            <person name="Stevens K."/>
            <person name="Taylor K."/>
            <person name="Taylor R.G."/>
            <person name="Tivey A."/>
            <person name="Walsh S.V."/>
            <person name="Warren T."/>
            <person name="Whitehead S."/>
            <person name="Woodward J.R."/>
            <person name="Volckaert G."/>
            <person name="Aert R."/>
            <person name="Robben J."/>
            <person name="Grymonprez B."/>
            <person name="Weltjens I."/>
            <person name="Vanstreels E."/>
            <person name="Rieger M."/>
            <person name="Schaefer M."/>
            <person name="Mueller-Auer S."/>
            <person name="Gabel C."/>
            <person name="Fuchs M."/>
            <person name="Duesterhoeft A."/>
            <person name="Fritzc C."/>
            <person name="Holzer E."/>
            <person name="Moestl D."/>
            <person name="Hilbert H."/>
            <person name="Borzym K."/>
            <person name="Langer I."/>
            <person name="Beck A."/>
            <person name="Lehrach H."/>
            <person name="Reinhardt R."/>
            <person name="Pohl T.M."/>
            <person name="Eger P."/>
            <person name="Zimmermann W."/>
            <person name="Wedler H."/>
            <person name="Wambutt R."/>
            <person name="Purnelle B."/>
            <person name="Goffeau A."/>
            <person name="Cadieu E."/>
            <person name="Dreano S."/>
            <person name="Gloux S."/>
            <person name="Lelaure V."/>
            <person name="Mottier S."/>
            <person name="Galibert F."/>
            <person name="Aves S.J."/>
            <person name="Xiang Z."/>
            <person name="Hunt C."/>
            <person name="Moore K."/>
            <person name="Hurst S.M."/>
            <person name="Lucas M."/>
            <person name="Rochet M."/>
            <person name="Gaillardin C."/>
            <person name="Tallada V.A."/>
            <person name="Garzon A."/>
            <person name="Thode G."/>
            <person name="Daga R.R."/>
            <person name="Cruzado L."/>
            <person name="Jimenez J."/>
            <person name="Sanchez M."/>
            <person name="del Rey F."/>
            <person name="Benito J."/>
            <person name="Dominguez A."/>
            <person name="Revuelta J.L."/>
            <person name="Moreno S."/>
            <person name="Armstrong J."/>
            <person name="Forsburg S.L."/>
            <person name="Cerutti L."/>
            <person name="Lowe T."/>
            <person name="McCombie W.R."/>
            <person name="Paulsen I."/>
            <person name="Potashkin J."/>
            <person name="Shpakovski G.V."/>
            <person name="Ussery D."/>
            <person name="Barrell B.G."/>
            <person name="Nurse P."/>
        </authorList>
    </citation>
    <scope>NUCLEOTIDE SEQUENCE [LARGE SCALE GENOMIC DNA]</scope>
    <source>
        <strain>972 / ATCC 24843</strain>
    </source>
</reference>
<reference key="2">
    <citation type="journal article" date="2006" name="Nat. Biotechnol.">
        <title>ORFeome cloning and global analysis of protein localization in the fission yeast Schizosaccharomyces pombe.</title>
        <authorList>
            <person name="Matsuyama A."/>
            <person name="Arai R."/>
            <person name="Yashiroda Y."/>
            <person name="Shirai A."/>
            <person name="Kamata A."/>
            <person name="Sekido S."/>
            <person name="Kobayashi Y."/>
            <person name="Hashimoto A."/>
            <person name="Hamamoto M."/>
            <person name="Hiraoka Y."/>
            <person name="Horinouchi S."/>
            <person name="Yoshida M."/>
        </authorList>
    </citation>
    <scope>SUBCELLULAR LOCATION [LARGE SCALE ANALYSIS]</scope>
</reference>
<proteinExistence type="inferred from homology"/>